<name>GLPK_FRATN</name>
<organism>
    <name type="scientific">Francisella tularensis subsp. novicida (strain U112)</name>
    <dbReference type="NCBI Taxonomy" id="401614"/>
    <lineage>
        <taxon>Bacteria</taxon>
        <taxon>Pseudomonadati</taxon>
        <taxon>Pseudomonadota</taxon>
        <taxon>Gammaproteobacteria</taxon>
        <taxon>Thiotrichales</taxon>
        <taxon>Francisellaceae</taxon>
        <taxon>Francisella</taxon>
    </lineage>
</organism>
<comment type="function">
    <text evidence="1">Key enzyme in the regulation of glycerol uptake and metabolism. Catalyzes the phosphorylation of glycerol to yield sn-glycerol 3-phosphate.</text>
</comment>
<comment type="catalytic activity">
    <reaction evidence="1">
        <text>glycerol + ATP = sn-glycerol 3-phosphate + ADP + H(+)</text>
        <dbReference type="Rhea" id="RHEA:21644"/>
        <dbReference type="ChEBI" id="CHEBI:15378"/>
        <dbReference type="ChEBI" id="CHEBI:17754"/>
        <dbReference type="ChEBI" id="CHEBI:30616"/>
        <dbReference type="ChEBI" id="CHEBI:57597"/>
        <dbReference type="ChEBI" id="CHEBI:456216"/>
        <dbReference type="EC" id="2.7.1.30"/>
    </reaction>
</comment>
<comment type="activity regulation">
    <text evidence="1">Inhibited by fructose 1,6-bisphosphate (FBP).</text>
</comment>
<comment type="pathway">
    <text evidence="1">Polyol metabolism; glycerol degradation via glycerol kinase pathway; sn-glycerol 3-phosphate from glycerol: step 1/1.</text>
</comment>
<comment type="similarity">
    <text evidence="1">Belongs to the FGGY kinase family.</text>
</comment>
<evidence type="ECO:0000255" key="1">
    <source>
        <dbReference type="HAMAP-Rule" id="MF_00186"/>
    </source>
</evidence>
<dbReference type="EC" id="2.7.1.30" evidence="1"/>
<dbReference type="EMBL" id="CP000439">
    <property type="protein sequence ID" value="ABK90445.1"/>
    <property type="molecule type" value="Genomic_DNA"/>
</dbReference>
<dbReference type="RefSeq" id="WP_003037605.1">
    <property type="nucleotide sequence ID" value="NZ_CP009633.1"/>
</dbReference>
<dbReference type="SMR" id="A0Q880"/>
<dbReference type="GeneID" id="75264683"/>
<dbReference type="KEGG" id="ftn:FTN_1585"/>
<dbReference type="KEGG" id="ftx:AW25_412"/>
<dbReference type="BioCyc" id="FTUL401614:G1G75-1637-MONOMER"/>
<dbReference type="UniPathway" id="UPA00618">
    <property type="reaction ID" value="UER00672"/>
</dbReference>
<dbReference type="Proteomes" id="UP000000762">
    <property type="component" value="Chromosome"/>
</dbReference>
<dbReference type="GO" id="GO:0005829">
    <property type="term" value="C:cytosol"/>
    <property type="evidence" value="ECO:0007669"/>
    <property type="project" value="TreeGrafter"/>
</dbReference>
<dbReference type="GO" id="GO:0005524">
    <property type="term" value="F:ATP binding"/>
    <property type="evidence" value="ECO:0007669"/>
    <property type="project" value="UniProtKB-UniRule"/>
</dbReference>
<dbReference type="GO" id="GO:0004370">
    <property type="term" value="F:glycerol kinase activity"/>
    <property type="evidence" value="ECO:0000250"/>
    <property type="project" value="UniProtKB"/>
</dbReference>
<dbReference type="GO" id="GO:0019563">
    <property type="term" value="P:glycerol catabolic process"/>
    <property type="evidence" value="ECO:0007669"/>
    <property type="project" value="UniProtKB-UniRule"/>
</dbReference>
<dbReference type="GO" id="GO:0006071">
    <property type="term" value="P:glycerol metabolic process"/>
    <property type="evidence" value="ECO:0000250"/>
    <property type="project" value="UniProtKB"/>
</dbReference>
<dbReference type="GO" id="GO:0006072">
    <property type="term" value="P:glycerol-3-phosphate metabolic process"/>
    <property type="evidence" value="ECO:0007669"/>
    <property type="project" value="InterPro"/>
</dbReference>
<dbReference type="CDD" id="cd07786">
    <property type="entry name" value="FGGY_EcGK_like"/>
    <property type="match status" value="1"/>
</dbReference>
<dbReference type="FunFam" id="3.30.420.40:FF:000007">
    <property type="entry name" value="Glycerol kinase"/>
    <property type="match status" value="1"/>
</dbReference>
<dbReference type="FunFam" id="3.30.420.40:FF:000008">
    <property type="entry name" value="Glycerol kinase"/>
    <property type="match status" value="1"/>
</dbReference>
<dbReference type="Gene3D" id="3.30.420.40">
    <property type="match status" value="2"/>
</dbReference>
<dbReference type="HAMAP" id="MF_00186">
    <property type="entry name" value="Glycerol_kin"/>
    <property type="match status" value="1"/>
</dbReference>
<dbReference type="InterPro" id="IPR043129">
    <property type="entry name" value="ATPase_NBD"/>
</dbReference>
<dbReference type="InterPro" id="IPR000577">
    <property type="entry name" value="Carb_kinase_FGGY"/>
</dbReference>
<dbReference type="InterPro" id="IPR018483">
    <property type="entry name" value="Carb_kinase_FGGY_CS"/>
</dbReference>
<dbReference type="InterPro" id="IPR018485">
    <property type="entry name" value="FGGY_C"/>
</dbReference>
<dbReference type="InterPro" id="IPR018484">
    <property type="entry name" value="FGGY_N"/>
</dbReference>
<dbReference type="InterPro" id="IPR005999">
    <property type="entry name" value="Glycerol_kin"/>
</dbReference>
<dbReference type="NCBIfam" id="TIGR01311">
    <property type="entry name" value="glycerol_kin"/>
    <property type="match status" value="1"/>
</dbReference>
<dbReference type="NCBIfam" id="NF000756">
    <property type="entry name" value="PRK00047.1"/>
    <property type="match status" value="1"/>
</dbReference>
<dbReference type="PANTHER" id="PTHR10196:SF69">
    <property type="entry name" value="GLYCEROL KINASE"/>
    <property type="match status" value="1"/>
</dbReference>
<dbReference type="PANTHER" id="PTHR10196">
    <property type="entry name" value="SUGAR KINASE"/>
    <property type="match status" value="1"/>
</dbReference>
<dbReference type="Pfam" id="PF02782">
    <property type="entry name" value="FGGY_C"/>
    <property type="match status" value="1"/>
</dbReference>
<dbReference type="Pfam" id="PF00370">
    <property type="entry name" value="FGGY_N"/>
    <property type="match status" value="1"/>
</dbReference>
<dbReference type="PIRSF" id="PIRSF000538">
    <property type="entry name" value="GlpK"/>
    <property type="match status" value="1"/>
</dbReference>
<dbReference type="SUPFAM" id="SSF53067">
    <property type="entry name" value="Actin-like ATPase domain"/>
    <property type="match status" value="2"/>
</dbReference>
<dbReference type="PROSITE" id="PS00933">
    <property type="entry name" value="FGGY_KINASES_1"/>
    <property type="match status" value="1"/>
</dbReference>
<dbReference type="PROSITE" id="PS00445">
    <property type="entry name" value="FGGY_KINASES_2"/>
    <property type="match status" value="1"/>
</dbReference>
<sequence>MSKDFILAVDQGTTSSRAIIFDKKGNIRKIAQKEFTQIYPKSGWVEHDAMEIWGTQSGVMREALEFGRVKPDQIAAIGITNQRETVVVWDKETGDPVYNAIVWQCRRTSSICDEIKRDPQFVKYIKENTGLVVDAYFSGTKVKWILDNVEGAREKANAGKLLMGTIDTWLIWNLTRGKVHATDYSNASRTMLFNINSLEWDKKILDYLNIPESMLPEVKNSSEVFGVTDSHTLGGAEIPIAGVAGDQHAALFGHCCFEKGMAKNTYGTGCFALMNVGDKPVYSDEGLLTTIAWAENGKPTYALEGSVFIAGAVIQWIRDGLGLVRSAEDSEYYATKIDSTNGVYLVPAFVGLGTPYWDMYARGTIVGITRDTKREHIIRAALEAIAYQAKDVLECMKEDTGLDLAGLRVDGGAVQNNFLMQFQSDILQSEISKPKINEITGLGAVFLAGLAVGFWKDKQELKSILTTEKVFEPQKDSQAVAHDYRGWKKAVERSKAWAEC</sequence>
<accession>A0Q880</accession>
<keyword id="KW-0067">ATP-binding</keyword>
<keyword id="KW-0319">Glycerol metabolism</keyword>
<keyword id="KW-0418">Kinase</keyword>
<keyword id="KW-0547">Nucleotide-binding</keyword>
<keyword id="KW-0808">Transferase</keyword>
<reference key="1">
    <citation type="journal article" date="2007" name="Genome Biol.">
        <title>Comparison of Francisella tularensis genomes reveals evolutionary events associated with the emergence of human pathogenic strains.</title>
        <authorList>
            <person name="Rohmer L."/>
            <person name="Fong C."/>
            <person name="Abmayr S."/>
            <person name="Wasnick M."/>
            <person name="Larson Freeman T.J."/>
            <person name="Radey M."/>
            <person name="Guina T."/>
            <person name="Svensson K."/>
            <person name="Hayden H.S."/>
            <person name="Jacobs M."/>
            <person name="Gallagher L.A."/>
            <person name="Manoil C."/>
            <person name="Ernst R.K."/>
            <person name="Drees B."/>
            <person name="Buckley D."/>
            <person name="Haugen E."/>
            <person name="Bovee D."/>
            <person name="Zhou Y."/>
            <person name="Chang J."/>
            <person name="Levy R."/>
            <person name="Lim R."/>
            <person name="Gillett W."/>
            <person name="Guenthener D."/>
            <person name="Kang A."/>
            <person name="Shaffer S.A."/>
            <person name="Taylor G."/>
            <person name="Chen J."/>
            <person name="Gallis B."/>
            <person name="D'Argenio D.A."/>
            <person name="Forsman M."/>
            <person name="Olson M.V."/>
            <person name="Goodlett D.R."/>
            <person name="Kaul R."/>
            <person name="Miller S.I."/>
            <person name="Brittnacher M.J."/>
        </authorList>
    </citation>
    <scope>NUCLEOTIDE SEQUENCE [LARGE SCALE GENOMIC DNA]</scope>
    <source>
        <strain>U112</strain>
    </source>
</reference>
<gene>
    <name evidence="1" type="primary">glpK</name>
    <name type="ordered locus">FTN_1585</name>
</gene>
<feature type="chain" id="PRO_1000058450" description="Glycerol kinase">
    <location>
        <begin position="1"/>
        <end position="500"/>
    </location>
</feature>
<feature type="binding site" evidence="1">
    <location>
        <position position="13"/>
    </location>
    <ligand>
        <name>ADP</name>
        <dbReference type="ChEBI" id="CHEBI:456216"/>
    </ligand>
</feature>
<feature type="binding site" evidence="1">
    <location>
        <position position="13"/>
    </location>
    <ligand>
        <name>ATP</name>
        <dbReference type="ChEBI" id="CHEBI:30616"/>
    </ligand>
</feature>
<feature type="binding site" evidence="1">
    <location>
        <position position="13"/>
    </location>
    <ligand>
        <name>sn-glycerol 3-phosphate</name>
        <dbReference type="ChEBI" id="CHEBI:57597"/>
    </ligand>
</feature>
<feature type="binding site" evidence="1">
    <location>
        <position position="14"/>
    </location>
    <ligand>
        <name>ATP</name>
        <dbReference type="ChEBI" id="CHEBI:30616"/>
    </ligand>
</feature>
<feature type="binding site" evidence="1">
    <location>
        <position position="15"/>
    </location>
    <ligand>
        <name>ATP</name>
        <dbReference type="ChEBI" id="CHEBI:30616"/>
    </ligand>
</feature>
<feature type="binding site" evidence="1">
    <location>
        <position position="17"/>
    </location>
    <ligand>
        <name>ADP</name>
        <dbReference type="ChEBI" id="CHEBI:456216"/>
    </ligand>
</feature>
<feature type="binding site" evidence="1">
    <location>
        <position position="83"/>
    </location>
    <ligand>
        <name>glycerol</name>
        <dbReference type="ChEBI" id="CHEBI:17754"/>
    </ligand>
</feature>
<feature type="binding site" evidence="1">
    <location>
        <position position="83"/>
    </location>
    <ligand>
        <name>sn-glycerol 3-phosphate</name>
        <dbReference type="ChEBI" id="CHEBI:57597"/>
    </ligand>
</feature>
<feature type="binding site" evidence="1">
    <location>
        <position position="84"/>
    </location>
    <ligand>
        <name>glycerol</name>
        <dbReference type="ChEBI" id="CHEBI:17754"/>
    </ligand>
</feature>
<feature type="binding site" evidence="1">
    <location>
        <position position="84"/>
    </location>
    <ligand>
        <name>sn-glycerol 3-phosphate</name>
        <dbReference type="ChEBI" id="CHEBI:57597"/>
    </ligand>
</feature>
<feature type="binding site" evidence="1">
    <location>
        <position position="136"/>
    </location>
    <ligand>
        <name>glycerol</name>
        <dbReference type="ChEBI" id="CHEBI:17754"/>
    </ligand>
</feature>
<feature type="binding site" evidence="1">
    <location>
        <position position="136"/>
    </location>
    <ligand>
        <name>sn-glycerol 3-phosphate</name>
        <dbReference type="ChEBI" id="CHEBI:57597"/>
    </ligand>
</feature>
<feature type="binding site" evidence="1">
    <location>
        <position position="246"/>
    </location>
    <ligand>
        <name>glycerol</name>
        <dbReference type="ChEBI" id="CHEBI:17754"/>
    </ligand>
</feature>
<feature type="binding site" evidence="1">
    <location>
        <position position="246"/>
    </location>
    <ligand>
        <name>sn-glycerol 3-phosphate</name>
        <dbReference type="ChEBI" id="CHEBI:57597"/>
    </ligand>
</feature>
<feature type="binding site" evidence="1">
    <location>
        <position position="247"/>
    </location>
    <ligand>
        <name>glycerol</name>
        <dbReference type="ChEBI" id="CHEBI:17754"/>
    </ligand>
</feature>
<feature type="binding site" evidence="1">
    <location>
        <position position="268"/>
    </location>
    <ligand>
        <name>ADP</name>
        <dbReference type="ChEBI" id="CHEBI:456216"/>
    </ligand>
</feature>
<feature type="binding site" evidence="1">
    <location>
        <position position="268"/>
    </location>
    <ligand>
        <name>ATP</name>
        <dbReference type="ChEBI" id="CHEBI:30616"/>
    </ligand>
</feature>
<feature type="binding site" evidence="1">
    <location>
        <position position="311"/>
    </location>
    <ligand>
        <name>ADP</name>
        <dbReference type="ChEBI" id="CHEBI:456216"/>
    </ligand>
</feature>
<feature type="binding site" evidence="1">
    <location>
        <position position="311"/>
    </location>
    <ligand>
        <name>ATP</name>
        <dbReference type="ChEBI" id="CHEBI:30616"/>
    </ligand>
</feature>
<feature type="binding site" evidence="1">
    <location>
        <position position="315"/>
    </location>
    <ligand>
        <name>ATP</name>
        <dbReference type="ChEBI" id="CHEBI:30616"/>
    </ligand>
</feature>
<feature type="binding site" evidence="1">
    <location>
        <position position="412"/>
    </location>
    <ligand>
        <name>ADP</name>
        <dbReference type="ChEBI" id="CHEBI:456216"/>
    </ligand>
</feature>
<feature type="binding site" evidence="1">
    <location>
        <position position="412"/>
    </location>
    <ligand>
        <name>ATP</name>
        <dbReference type="ChEBI" id="CHEBI:30616"/>
    </ligand>
</feature>
<feature type="binding site" evidence="1">
    <location>
        <position position="416"/>
    </location>
    <ligand>
        <name>ADP</name>
        <dbReference type="ChEBI" id="CHEBI:456216"/>
    </ligand>
</feature>
<proteinExistence type="inferred from homology"/>
<protein>
    <recommendedName>
        <fullName evidence="1">Glycerol kinase</fullName>
        <ecNumber evidence="1">2.7.1.30</ecNumber>
    </recommendedName>
    <alternativeName>
        <fullName evidence="1">ATP:glycerol 3-phosphotransferase</fullName>
    </alternativeName>
    <alternativeName>
        <fullName evidence="1">Glycerokinase</fullName>
        <shortName evidence="1">GK</shortName>
    </alternativeName>
</protein>